<evidence type="ECO:0000255" key="1">
    <source>
        <dbReference type="HAMAP-Rule" id="MF_00082"/>
    </source>
</evidence>
<name>ARGB_PSYA2</name>
<sequence>MTLNLDDAKITAEVLTTALPYIQRFVDKLIVVKYGGNAMTDPALESSFARDIVLLKTVGMHPVVVHGGGPQVDNLLKELGRHSDRIDGMRVTDKSTMDIVEMVLGGSVNKSIVSLINKHGGCAIGLTGKDANLILAKKLMMEKIGTDGVAVPVDLGFVGDVVSVNKDVINMLIASDFIPVIAPLGVDEEGNTYNINADLVAGKVAEFLQAEKLMLLTNIKGVLGRDGEVVTGLTPKTVDSLIEDGTISGGMIPKIQCALDAVRSGVKSAVIVDGRVPHATLLEIFTNEGVGTLISRDLDLRSN</sequence>
<keyword id="KW-0028">Amino-acid biosynthesis</keyword>
<keyword id="KW-0055">Arginine biosynthesis</keyword>
<keyword id="KW-0067">ATP-binding</keyword>
<keyword id="KW-0963">Cytoplasm</keyword>
<keyword id="KW-0418">Kinase</keyword>
<keyword id="KW-0547">Nucleotide-binding</keyword>
<keyword id="KW-1185">Reference proteome</keyword>
<keyword id="KW-0808">Transferase</keyword>
<gene>
    <name evidence="1" type="primary">argB</name>
    <name type="ordered locus">Psyc_0579</name>
</gene>
<dbReference type="EC" id="2.7.2.8" evidence="1"/>
<dbReference type="EMBL" id="CP000082">
    <property type="protein sequence ID" value="AAZ18440.1"/>
    <property type="molecule type" value="Genomic_DNA"/>
</dbReference>
<dbReference type="RefSeq" id="WP_011279869.1">
    <property type="nucleotide sequence ID" value="NC_007204.1"/>
</dbReference>
<dbReference type="SMR" id="Q4FU68"/>
<dbReference type="STRING" id="259536.Psyc_0579"/>
<dbReference type="KEGG" id="par:Psyc_0579"/>
<dbReference type="eggNOG" id="COG0548">
    <property type="taxonomic scope" value="Bacteria"/>
</dbReference>
<dbReference type="HOGENOM" id="CLU_053680_0_0_6"/>
<dbReference type="OrthoDB" id="9803155at2"/>
<dbReference type="UniPathway" id="UPA00068">
    <property type="reaction ID" value="UER00107"/>
</dbReference>
<dbReference type="Proteomes" id="UP000000546">
    <property type="component" value="Chromosome"/>
</dbReference>
<dbReference type="GO" id="GO:0005737">
    <property type="term" value="C:cytoplasm"/>
    <property type="evidence" value="ECO:0007669"/>
    <property type="project" value="UniProtKB-SubCell"/>
</dbReference>
<dbReference type="GO" id="GO:0003991">
    <property type="term" value="F:acetylglutamate kinase activity"/>
    <property type="evidence" value="ECO:0007669"/>
    <property type="project" value="UniProtKB-UniRule"/>
</dbReference>
<dbReference type="GO" id="GO:0005524">
    <property type="term" value="F:ATP binding"/>
    <property type="evidence" value="ECO:0007669"/>
    <property type="project" value="UniProtKB-UniRule"/>
</dbReference>
<dbReference type="GO" id="GO:0042450">
    <property type="term" value="P:arginine biosynthetic process via ornithine"/>
    <property type="evidence" value="ECO:0007669"/>
    <property type="project" value="UniProtKB-UniRule"/>
</dbReference>
<dbReference type="GO" id="GO:0006526">
    <property type="term" value="P:L-arginine biosynthetic process"/>
    <property type="evidence" value="ECO:0007669"/>
    <property type="project" value="UniProtKB-UniPathway"/>
</dbReference>
<dbReference type="CDD" id="cd04250">
    <property type="entry name" value="AAK_NAGK-C"/>
    <property type="match status" value="1"/>
</dbReference>
<dbReference type="FunFam" id="3.40.1160.10:FF:000004">
    <property type="entry name" value="Acetylglutamate kinase"/>
    <property type="match status" value="1"/>
</dbReference>
<dbReference type="Gene3D" id="3.40.1160.10">
    <property type="entry name" value="Acetylglutamate kinase-like"/>
    <property type="match status" value="1"/>
</dbReference>
<dbReference type="HAMAP" id="MF_00082">
    <property type="entry name" value="ArgB"/>
    <property type="match status" value="1"/>
</dbReference>
<dbReference type="InterPro" id="IPR036393">
    <property type="entry name" value="AceGlu_kinase-like_sf"/>
</dbReference>
<dbReference type="InterPro" id="IPR004662">
    <property type="entry name" value="AcgluKinase_fam"/>
</dbReference>
<dbReference type="InterPro" id="IPR037528">
    <property type="entry name" value="ArgB"/>
</dbReference>
<dbReference type="InterPro" id="IPR001048">
    <property type="entry name" value="Asp/Glu/Uridylate_kinase"/>
</dbReference>
<dbReference type="InterPro" id="IPR001057">
    <property type="entry name" value="Glu/AcGlu_kinase"/>
</dbReference>
<dbReference type="InterPro" id="IPR041727">
    <property type="entry name" value="NAGK-C"/>
</dbReference>
<dbReference type="NCBIfam" id="TIGR00761">
    <property type="entry name" value="argB"/>
    <property type="match status" value="1"/>
</dbReference>
<dbReference type="PANTHER" id="PTHR23342">
    <property type="entry name" value="N-ACETYLGLUTAMATE SYNTHASE"/>
    <property type="match status" value="1"/>
</dbReference>
<dbReference type="PANTHER" id="PTHR23342:SF0">
    <property type="entry name" value="N-ACETYLGLUTAMATE SYNTHASE, MITOCHONDRIAL"/>
    <property type="match status" value="1"/>
</dbReference>
<dbReference type="Pfam" id="PF00696">
    <property type="entry name" value="AA_kinase"/>
    <property type="match status" value="1"/>
</dbReference>
<dbReference type="PIRSF" id="PIRSF000728">
    <property type="entry name" value="NAGK"/>
    <property type="match status" value="1"/>
</dbReference>
<dbReference type="PRINTS" id="PR00474">
    <property type="entry name" value="GLU5KINASE"/>
</dbReference>
<dbReference type="SUPFAM" id="SSF53633">
    <property type="entry name" value="Carbamate kinase-like"/>
    <property type="match status" value="1"/>
</dbReference>
<organism>
    <name type="scientific">Psychrobacter arcticus (strain DSM 17307 / VKM B-2377 / 273-4)</name>
    <dbReference type="NCBI Taxonomy" id="259536"/>
    <lineage>
        <taxon>Bacteria</taxon>
        <taxon>Pseudomonadati</taxon>
        <taxon>Pseudomonadota</taxon>
        <taxon>Gammaproteobacteria</taxon>
        <taxon>Moraxellales</taxon>
        <taxon>Moraxellaceae</taxon>
        <taxon>Psychrobacter</taxon>
    </lineage>
</organism>
<reference key="1">
    <citation type="journal article" date="2010" name="Appl. Environ. Microbiol.">
        <title>The genome sequence of Psychrobacter arcticus 273-4, a psychroactive Siberian permafrost bacterium, reveals mechanisms for adaptation to low-temperature growth.</title>
        <authorList>
            <person name="Ayala-del-Rio H.L."/>
            <person name="Chain P.S."/>
            <person name="Grzymski J.J."/>
            <person name="Ponder M.A."/>
            <person name="Ivanova N."/>
            <person name="Bergholz P.W."/>
            <person name="Di Bartolo G."/>
            <person name="Hauser L."/>
            <person name="Land M."/>
            <person name="Bakermans C."/>
            <person name="Rodrigues D."/>
            <person name="Klappenbach J."/>
            <person name="Zarka D."/>
            <person name="Larimer F."/>
            <person name="Richardson P."/>
            <person name="Murray A."/>
            <person name="Thomashow M."/>
            <person name="Tiedje J.M."/>
        </authorList>
    </citation>
    <scope>NUCLEOTIDE SEQUENCE [LARGE SCALE GENOMIC DNA]</scope>
    <source>
        <strain>DSM 17307 / VKM B-2377 / 273-4</strain>
    </source>
</reference>
<proteinExistence type="inferred from homology"/>
<comment type="function">
    <text evidence="1">Catalyzes the ATP-dependent phosphorylation of N-acetyl-L-glutamate.</text>
</comment>
<comment type="catalytic activity">
    <reaction evidence="1">
        <text>N-acetyl-L-glutamate + ATP = N-acetyl-L-glutamyl 5-phosphate + ADP</text>
        <dbReference type="Rhea" id="RHEA:14629"/>
        <dbReference type="ChEBI" id="CHEBI:30616"/>
        <dbReference type="ChEBI" id="CHEBI:44337"/>
        <dbReference type="ChEBI" id="CHEBI:57936"/>
        <dbReference type="ChEBI" id="CHEBI:456216"/>
        <dbReference type="EC" id="2.7.2.8"/>
    </reaction>
</comment>
<comment type="pathway">
    <text evidence="1">Amino-acid biosynthesis; L-arginine biosynthesis; N(2)-acetyl-L-ornithine from L-glutamate: step 2/4.</text>
</comment>
<comment type="subcellular location">
    <subcellularLocation>
        <location evidence="1">Cytoplasm</location>
    </subcellularLocation>
</comment>
<comment type="similarity">
    <text evidence="1">Belongs to the acetylglutamate kinase family. ArgB subfamily.</text>
</comment>
<protein>
    <recommendedName>
        <fullName evidence="1">Acetylglutamate kinase</fullName>
        <ecNumber evidence="1">2.7.2.8</ecNumber>
    </recommendedName>
    <alternativeName>
        <fullName evidence="1">N-acetyl-L-glutamate 5-phosphotransferase</fullName>
    </alternativeName>
    <alternativeName>
        <fullName evidence="1">NAG kinase</fullName>
        <shortName evidence="1">NAGK</shortName>
    </alternativeName>
</protein>
<feature type="chain" id="PRO_0000264738" description="Acetylglutamate kinase">
    <location>
        <begin position="1"/>
        <end position="303"/>
    </location>
</feature>
<feature type="binding site" evidence="1">
    <location>
        <begin position="68"/>
        <end position="69"/>
    </location>
    <ligand>
        <name>substrate</name>
    </ligand>
</feature>
<feature type="binding site" evidence="1">
    <location>
        <position position="90"/>
    </location>
    <ligand>
        <name>substrate</name>
    </ligand>
</feature>
<feature type="binding site" evidence="1">
    <location>
        <position position="194"/>
    </location>
    <ligand>
        <name>substrate</name>
    </ligand>
</feature>
<feature type="site" description="Transition state stabilizer" evidence="1">
    <location>
        <position position="33"/>
    </location>
</feature>
<feature type="site" description="Transition state stabilizer" evidence="1">
    <location>
        <position position="254"/>
    </location>
</feature>
<accession>Q4FU68</accession>